<proteinExistence type="inferred from homology"/>
<protein>
    <recommendedName>
        <fullName evidence="1">Glycerol-3-phosphate dehydrogenase [NAD(P)+]</fullName>
        <ecNumber evidence="1">1.1.1.94</ecNumber>
    </recommendedName>
    <alternativeName>
        <fullName evidence="1">NAD(P)(+)-dependent glycerol-3-phosphate dehydrogenase</fullName>
    </alternativeName>
    <alternativeName>
        <fullName evidence="1">NAD(P)H-dependent dihydroxyacetone-phosphate reductase</fullName>
    </alternativeName>
</protein>
<name>GPDA_ECOLU</name>
<sequence length="339" mass="36371">MNQRNASMTVIGAGSYGTALAITLARNGHEVVLWGHDPEHIATLERDRCNAAFLPDVPFPDTLHLESDLATALAASRNILVVVPSHVFGEVLRQIKPLMRPDARLVWATKGLEAETGRLLQDVAREALGDHIPLAVISGPTFAKELAAGLPTAISLASTDQTFADDLQQLLHCGKSFRVYSNPDFIGVQLGGAVKNVIAIGAGMSDGIGFGANARTALITRGLAEMSRLGAALGADPATFMGMAGLGDLVLTCTDNQSRNRRFGMMLGQGMDVQSAQEKIGQVVEGYRNTKEVRELAHRFGVEMPITEEIYQVLYCGKNAREAALTLLGRARKDERSSH</sequence>
<feature type="chain" id="PRO_1000190145" description="Glycerol-3-phosphate dehydrogenase [NAD(P)+]">
    <location>
        <begin position="1"/>
        <end position="339"/>
    </location>
</feature>
<feature type="active site" description="Proton acceptor" evidence="1">
    <location>
        <position position="195"/>
    </location>
</feature>
<feature type="binding site" evidence="1">
    <location>
        <position position="15"/>
    </location>
    <ligand>
        <name>NADPH</name>
        <dbReference type="ChEBI" id="CHEBI:57783"/>
    </ligand>
</feature>
<feature type="binding site" evidence="1">
    <location>
        <position position="16"/>
    </location>
    <ligand>
        <name>NADPH</name>
        <dbReference type="ChEBI" id="CHEBI:57783"/>
    </ligand>
</feature>
<feature type="binding site" evidence="1">
    <location>
        <position position="36"/>
    </location>
    <ligand>
        <name>NADPH</name>
        <dbReference type="ChEBI" id="CHEBI:57783"/>
    </ligand>
</feature>
<feature type="binding site" evidence="1">
    <location>
        <position position="110"/>
    </location>
    <ligand>
        <name>NADPH</name>
        <dbReference type="ChEBI" id="CHEBI:57783"/>
    </ligand>
</feature>
<feature type="binding site" evidence="1">
    <location>
        <position position="110"/>
    </location>
    <ligand>
        <name>sn-glycerol 3-phosphate</name>
        <dbReference type="ChEBI" id="CHEBI:57597"/>
    </ligand>
</feature>
<feature type="binding site" evidence="1">
    <location>
        <position position="139"/>
    </location>
    <ligand>
        <name>sn-glycerol 3-phosphate</name>
        <dbReference type="ChEBI" id="CHEBI:57597"/>
    </ligand>
</feature>
<feature type="binding site" evidence="1">
    <location>
        <position position="141"/>
    </location>
    <ligand>
        <name>sn-glycerol 3-phosphate</name>
        <dbReference type="ChEBI" id="CHEBI:57597"/>
    </ligand>
</feature>
<feature type="binding site" evidence="1">
    <location>
        <position position="143"/>
    </location>
    <ligand>
        <name>NADPH</name>
        <dbReference type="ChEBI" id="CHEBI:57783"/>
    </ligand>
</feature>
<feature type="binding site" evidence="1">
    <location>
        <position position="195"/>
    </location>
    <ligand>
        <name>sn-glycerol 3-phosphate</name>
        <dbReference type="ChEBI" id="CHEBI:57597"/>
    </ligand>
</feature>
<feature type="binding site" evidence="1">
    <location>
        <position position="248"/>
    </location>
    <ligand>
        <name>sn-glycerol 3-phosphate</name>
        <dbReference type="ChEBI" id="CHEBI:57597"/>
    </ligand>
</feature>
<feature type="binding site" evidence="1">
    <location>
        <position position="258"/>
    </location>
    <ligand>
        <name>sn-glycerol 3-phosphate</name>
        <dbReference type="ChEBI" id="CHEBI:57597"/>
    </ligand>
</feature>
<feature type="binding site" evidence="1">
    <location>
        <position position="259"/>
    </location>
    <ligand>
        <name>NADPH</name>
        <dbReference type="ChEBI" id="CHEBI:57783"/>
    </ligand>
</feature>
<feature type="binding site" evidence="1">
    <location>
        <position position="259"/>
    </location>
    <ligand>
        <name>sn-glycerol 3-phosphate</name>
        <dbReference type="ChEBI" id="CHEBI:57597"/>
    </ligand>
</feature>
<feature type="binding site" evidence="1">
    <location>
        <position position="260"/>
    </location>
    <ligand>
        <name>sn-glycerol 3-phosphate</name>
        <dbReference type="ChEBI" id="CHEBI:57597"/>
    </ligand>
</feature>
<feature type="binding site" evidence="1">
    <location>
        <position position="283"/>
    </location>
    <ligand>
        <name>NADPH</name>
        <dbReference type="ChEBI" id="CHEBI:57783"/>
    </ligand>
</feature>
<feature type="binding site" evidence="1">
    <location>
        <position position="285"/>
    </location>
    <ligand>
        <name>NADPH</name>
        <dbReference type="ChEBI" id="CHEBI:57783"/>
    </ligand>
</feature>
<gene>
    <name evidence="1" type="primary">gpsA</name>
    <name type="ordered locus">ECUMN_4125</name>
</gene>
<evidence type="ECO:0000255" key="1">
    <source>
        <dbReference type="HAMAP-Rule" id="MF_00394"/>
    </source>
</evidence>
<reference key="1">
    <citation type="journal article" date="2009" name="PLoS Genet.">
        <title>Organised genome dynamics in the Escherichia coli species results in highly diverse adaptive paths.</title>
        <authorList>
            <person name="Touchon M."/>
            <person name="Hoede C."/>
            <person name="Tenaillon O."/>
            <person name="Barbe V."/>
            <person name="Baeriswyl S."/>
            <person name="Bidet P."/>
            <person name="Bingen E."/>
            <person name="Bonacorsi S."/>
            <person name="Bouchier C."/>
            <person name="Bouvet O."/>
            <person name="Calteau A."/>
            <person name="Chiapello H."/>
            <person name="Clermont O."/>
            <person name="Cruveiller S."/>
            <person name="Danchin A."/>
            <person name="Diard M."/>
            <person name="Dossat C."/>
            <person name="Karoui M.E."/>
            <person name="Frapy E."/>
            <person name="Garry L."/>
            <person name="Ghigo J.M."/>
            <person name="Gilles A.M."/>
            <person name="Johnson J."/>
            <person name="Le Bouguenec C."/>
            <person name="Lescat M."/>
            <person name="Mangenot S."/>
            <person name="Martinez-Jehanne V."/>
            <person name="Matic I."/>
            <person name="Nassif X."/>
            <person name="Oztas S."/>
            <person name="Petit M.A."/>
            <person name="Pichon C."/>
            <person name="Rouy Z."/>
            <person name="Ruf C.S."/>
            <person name="Schneider D."/>
            <person name="Tourret J."/>
            <person name="Vacherie B."/>
            <person name="Vallenet D."/>
            <person name="Medigue C."/>
            <person name="Rocha E.P.C."/>
            <person name="Denamur E."/>
        </authorList>
    </citation>
    <scope>NUCLEOTIDE SEQUENCE [LARGE SCALE GENOMIC DNA]</scope>
    <source>
        <strain>UMN026 / ExPEC</strain>
    </source>
</reference>
<organism>
    <name type="scientific">Escherichia coli O17:K52:H18 (strain UMN026 / ExPEC)</name>
    <dbReference type="NCBI Taxonomy" id="585056"/>
    <lineage>
        <taxon>Bacteria</taxon>
        <taxon>Pseudomonadati</taxon>
        <taxon>Pseudomonadota</taxon>
        <taxon>Gammaproteobacteria</taxon>
        <taxon>Enterobacterales</taxon>
        <taxon>Enterobacteriaceae</taxon>
        <taxon>Escherichia</taxon>
    </lineage>
</organism>
<dbReference type="EC" id="1.1.1.94" evidence="1"/>
<dbReference type="EMBL" id="CU928163">
    <property type="protein sequence ID" value="CAR15266.1"/>
    <property type="molecule type" value="Genomic_DNA"/>
</dbReference>
<dbReference type="RefSeq" id="WP_001076190.1">
    <property type="nucleotide sequence ID" value="NC_011751.1"/>
</dbReference>
<dbReference type="RefSeq" id="YP_002414764.1">
    <property type="nucleotide sequence ID" value="NC_011751.1"/>
</dbReference>
<dbReference type="SMR" id="B7NER5"/>
<dbReference type="STRING" id="585056.ECUMN_4125"/>
<dbReference type="KEGG" id="eum:ECUMN_4125"/>
<dbReference type="PATRIC" id="fig|585056.7.peg.4299"/>
<dbReference type="HOGENOM" id="CLU_033449_0_2_6"/>
<dbReference type="UniPathway" id="UPA00940"/>
<dbReference type="Proteomes" id="UP000007097">
    <property type="component" value="Chromosome"/>
</dbReference>
<dbReference type="GO" id="GO:0005829">
    <property type="term" value="C:cytosol"/>
    <property type="evidence" value="ECO:0007669"/>
    <property type="project" value="TreeGrafter"/>
</dbReference>
<dbReference type="GO" id="GO:0047952">
    <property type="term" value="F:glycerol-3-phosphate dehydrogenase [NAD(P)+] activity"/>
    <property type="evidence" value="ECO:0007669"/>
    <property type="project" value="UniProtKB-UniRule"/>
</dbReference>
<dbReference type="GO" id="GO:0051287">
    <property type="term" value="F:NAD binding"/>
    <property type="evidence" value="ECO:0007669"/>
    <property type="project" value="InterPro"/>
</dbReference>
<dbReference type="GO" id="GO:0005975">
    <property type="term" value="P:carbohydrate metabolic process"/>
    <property type="evidence" value="ECO:0007669"/>
    <property type="project" value="InterPro"/>
</dbReference>
<dbReference type="GO" id="GO:0046167">
    <property type="term" value="P:glycerol-3-phosphate biosynthetic process"/>
    <property type="evidence" value="ECO:0007669"/>
    <property type="project" value="UniProtKB-UniRule"/>
</dbReference>
<dbReference type="GO" id="GO:0046168">
    <property type="term" value="P:glycerol-3-phosphate catabolic process"/>
    <property type="evidence" value="ECO:0007669"/>
    <property type="project" value="InterPro"/>
</dbReference>
<dbReference type="GO" id="GO:0046474">
    <property type="term" value="P:glycerophospholipid biosynthetic process"/>
    <property type="evidence" value="ECO:0007669"/>
    <property type="project" value="TreeGrafter"/>
</dbReference>
<dbReference type="FunFam" id="1.10.1040.10:FF:000001">
    <property type="entry name" value="Glycerol-3-phosphate dehydrogenase [NAD(P)+]"/>
    <property type="match status" value="1"/>
</dbReference>
<dbReference type="FunFam" id="3.40.50.720:FF:000019">
    <property type="entry name" value="Glycerol-3-phosphate dehydrogenase [NAD(P)+]"/>
    <property type="match status" value="1"/>
</dbReference>
<dbReference type="Gene3D" id="1.10.1040.10">
    <property type="entry name" value="N-(1-d-carboxylethyl)-l-norvaline Dehydrogenase, domain 2"/>
    <property type="match status" value="1"/>
</dbReference>
<dbReference type="Gene3D" id="3.40.50.720">
    <property type="entry name" value="NAD(P)-binding Rossmann-like Domain"/>
    <property type="match status" value="1"/>
</dbReference>
<dbReference type="HAMAP" id="MF_00394">
    <property type="entry name" value="NAD_Glyc3P_dehydrog"/>
    <property type="match status" value="1"/>
</dbReference>
<dbReference type="InterPro" id="IPR008927">
    <property type="entry name" value="6-PGluconate_DH-like_C_sf"/>
</dbReference>
<dbReference type="InterPro" id="IPR013328">
    <property type="entry name" value="6PGD_dom2"/>
</dbReference>
<dbReference type="InterPro" id="IPR006168">
    <property type="entry name" value="G3P_DH_NAD-dep"/>
</dbReference>
<dbReference type="InterPro" id="IPR006109">
    <property type="entry name" value="G3P_DH_NAD-dep_C"/>
</dbReference>
<dbReference type="InterPro" id="IPR011128">
    <property type="entry name" value="G3P_DH_NAD-dep_N"/>
</dbReference>
<dbReference type="InterPro" id="IPR036291">
    <property type="entry name" value="NAD(P)-bd_dom_sf"/>
</dbReference>
<dbReference type="NCBIfam" id="NF000939">
    <property type="entry name" value="PRK00094.1-1"/>
    <property type="match status" value="1"/>
</dbReference>
<dbReference type="NCBIfam" id="NF000940">
    <property type="entry name" value="PRK00094.1-2"/>
    <property type="match status" value="1"/>
</dbReference>
<dbReference type="NCBIfam" id="NF000942">
    <property type="entry name" value="PRK00094.1-4"/>
    <property type="match status" value="1"/>
</dbReference>
<dbReference type="PANTHER" id="PTHR11728">
    <property type="entry name" value="GLYCEROL-3-PHOSPHATE DEHYDROGENASE"/>
    <property type="match status" value="1"/>
</dbReference>
<dbReference type="PANTHER" id="PTHR11728:SF1">
    <property type="entry name" value="GLYCEROL-3-PHOSPHATE DEHYDROGENASE [NAD(+)] 2, CHLOROPLASTIC"/>
    <property type="match status" value="1"/>
</dbReference>
<dbReference type="Pfam" id="PF07479">
    <property type="entry name" value="NAD_Gly3P_dh_C"/>
    <property type="match status" value="1"/>
</dbReference>
<dbReference type="Pfam" id="PF01210">
    <property type="entry name" value="NAD_Gly3P_dh_N"/>
    <property type="match status" value="1"/>
</dbReference>
<dbReference type="PIRSF" id="PIRSF000114">
    <property type="entry name" value="Glycerol-3-P_dh"/>
    <property type="match status" value="1"/>
</dbReference>
<dbReference type="PRINTS" id="PR00077">
    <property type="entry name" value="GPDHDRGNASE"/>
</dbReference>
<dbReference type="SUPFAM" id="SSF48179">
    <property type="entry name" value="6-phosphogluconate dehydrogenase C-terminal domain-like"/>
    <property type="match status" value="1"/>
</dbReference>
<dbReference type="SUPFAM" id="SSF51735">
    <property type="entry name" value="NAD(P)-binding Rossmann-fold domains"/>
    <property type="match status" value="1"/>
</dbReference>
<dbReference type="PROSITE" id="PS00957">
    <property type="entry name" value="NAD_G3PDH"/>
    <property type="match status" value="1"/>
</dbReference>
<comment type="function">
    <text evidence="1">Catalyzes the reduction of the glycolytic intermediate dihydroxyacetone phosphate (DHAP) to sn-glycerol 3-phosphate (G3P), the key precursor for phospholipid synthesis.</text>
</comment>
<comment type="catalytic activity">
    <reaction evidence="1">
        <text>sn-glycerol 3-phosphate + NAD(+) = dihydroxyacetone phosphate + NADH + H(+)</text>
        <dbReference type="Rhea" id="RHEA:11092"/>
        <dbReference type="ChEBI" id="CHEBI:15378"/>
        <dbReference type="ChEBI" id="CHEBI:57540"/>
        <dbReference type="ChEBI" id="CHEBI:57597"/>
        <dbReference type="ChEBI" id="CHEBI:57642"/>
        <dbReference type="ChEBI" id="CHEBI:57945"/>
        <dbReference type="EC" id="1.1.1.94"/>
    </reaction>
    <physiologicalReaction direction="right-to-left" evidence="1">
        <dbReference type="Rhea" id="RHEA:11094"/>
    </physiologicalReaction>
</comment>
<comment type="catalytic activity">
    <reaction evidence="1">
        <text>sn-glycerol 3-phosphate + NADP(+) = dihydroxyacetone phosphate + NADPH + H(+)</text>
        <dbReference type="Rhea" id="RHEA:11096"/>
        <dbReference type="ChEBI" id="CHEBI:15378"/>
        <dbReference type="ChEBI" id="CHEBI:57597"/>
        <dbReference type="ChEBI" id="CHEBI:57642"/>
        <dbReference type="ChEBI" id="CHEBI:57783"/>
        <dbReference type="ChEBI" id="CHEBI:58349"/>
        <dbReference type="EC" id="1.1.1.94"/>
    </reaction>
    <physiologicalReaction direction="right-to-left" evidence="1">
        <dbReference type="Rhea" id="RHEA:11098"/>
    </physiologicalReaction>
</comment>
<comment type="pathway">
    <text evidence="1">Membrane lipid metabolism; glycerophospholipid metabolism.</text>
</comment>
<comment type="subcellular location">
    <subcellularLocation>
        <location evidence="1">Cytoplasm</location>
    </subcellularLocation>
</comment>
<comment type="similarity">
    <text evidence="1">Belongs to the NAD-dependent glycerol-3-phosphate dehydrogenase family.</text>
</comment>
<accession>B7NER5</accession>
<keyword id="KW-0963">Cytoplasm</keyword>
<keyword id="KW-0444">Lipid biosynthesis</keyword>
<keyword id="KW-0443">Lipid metabolism</keyword>
<keyword id="KW-0520">NAD</keyword>
<keyword id="KW-0521">NADP</keyword>
<keyword id="KW-0547">Nucleotide-binding</keyword>
<keyword id="KW-0560">Oxidoreductase</keyword>
<keyword id="KW-0594">Phospholipid biosynthesis</keyword>
<keyword id="KW-1208">Phospholipid metabolism</keyword>